<name>MED15_SCHPO</name>
<evidence type="ECO:0000256" key="1">
    <source>
        <dbReference type="SAM" id="MobiDB-lite"/>
    </source>
</evidence>
<evidence type="ECO:0000269" key="2">
    <source>
    </source>
</evidence>
<evidence type="ECO:0000269" key="3">
    <source>
    </source>
</evidence>
<evidence type="ECO:0000269" key="4">
    <source>
    </source>
</evidence>
<evidence type="ECO:0000305" key="5"/>
<evidence type="ECO:0000312" key="6">
    <source>
        <dbReference type="PomBase" id="SPBC146.01"/>
    </source>
</evidence>
<dbReference type="EMBL" id="CU329671">
    <property type="protein sequence ID" value="CAK9839692.1"/>
    <property type="molecule type" value="Genomic_DNA"/>
</dbReference>
<dbReference type="PIR" id="T39415">
    <property type="entry name" value="T39415"/>
</dbReference>
<dbReference type="BioGRID" id="276265">
    <property type="interactions" value="5"/>
</dbReference>
<dbReference type="STRING" id="284812.Q9Y808"/>
<dbReference type="iPTMnet" id="Q9Y808"/>
<dbReference type="PaxDb" id="4896-SPBC146.01.1"/>
<dbReference type="EnsemblFungi" id="SPBC146.01.1">
    <property type="protein sequence ID" value="SPBC146.01.1:pep"/>
    <property type="gene ID" value="SPBC146.01"/>
</dbReference>
<dbReference type="PomBase" id="SPBC146.01">
    <property type="gene designation" value="med15"/>
</dbReference>
<dbReference type="VEuPathDB" id="FungiDB:SPBC146.01"/>
<dbReference type="eggNOG" id="ENOG502QVXD">
    <property type="taxonomic scope" value="Eukaryota"/>
</dbReference>
<dbReference type="HOGENOM" id="CLU_297391_0_0_1"/>
<dbReference type="InParanoid" id="Q9Y808"/>
<dbReference type="OMA" id="YCITAND"/>
<dbReference type="PRO" id="PR:Q9Y808"/>
<dbReference type="Proteomes" id="UP000002485">
    <property type="component" value="Chromosome II"/>
</dbReference>
<dbReference type="GO" id="GO:0000785">
    <property type="term" value="C:chromatin"/>
    <property type="evidence" value="ECO:0000314"/>
    <property type="project" value="PomBase"/>
</dbReference>
<dbReference type="GO" id="GO:0016592">
    <property type="term" value="C:mediator complex"/>
    <property type="evidence" value="ECO:0007669"/>
    <property type="project" value="InterPro"/>
</dbReference>
<dbReference type="GO" id="GO:0005634">
    <property type="term" value="C:nucleus"/>
    <property type="evidence" value="ECO:0007005"/>
    <property type="project" value="PomBase"/>
</dbReference>
<dbReference type="GO" id="GO:0036033">
    <property type="term" value="F:mediator complex binding"/>
    <property type="evidence" value="ECO:0000353"/>
    <property type="project" value="PomBase"/>
</dbReference>
<dbReference type="GO" id="GO:0003713">
    <property type="term" value="F:transcription coactivator activity"/>
    <property type="evidence" value="ECO:0000266"/>
    <property type="project" value="PomBase"/>
</dbReference>
<dbReference type="GO" id="GO:0003712">
    <property type="term" value="F:transcription coregulator activity"/>
    <property type="evidence" value="ECO:0007669"/>
    <property type="project" value="InterPro"/>
</dbReference>
<dbReference type="GO" id="GO:0045944">
    <property type="term" value="P:positive regulation of transcription by RNA polymerase II"/>
    <property type="evidence" value="ECO:0000266"/>
    <property type="project" value="PomBase"/>
</dbReference>
<dbReference type="GO" id="GO:0006357">
    <property type="term" value="P:regulation of transcription by RNA polymerase II"/>
    <property type="evidence" value="ECO:0007669"/>
    <property type="project" value="InterPro"/>
</dbReference>
<dbReference type="CDD" id="cd12191">
    <property type="entry name" value="gal11_coact"/>
    <property type="match status" value="1"/>
</dbReference>
<dbReference type="Gene3D" id="1.10.287.2920">
    <property type="match status" value="1"/>
</dbReference>
<dbReference type="Gene3D" id="1.10.246.20">
    <property type="entry name" value="Coactivator CBP, KIX domain"/>
    <property type="match status" value="1"/>
</dbReference>
<dbReference type="InterPro" id="IPR033789">
    <property type="entry name" value="Gal11_coact"/>
</dbReference>
<dbReference type="InterPro" id="IPR036529">
    <property type="entry name" value="KIX_dom_sf"/>
</dbReference>
<dbReference type="InterPro" id="IPR036546">
    <property type="entry name" value="MED15_KIX"/>
</dbReference>
<dbReference type="InterPro" id="IPR008626">
    <property type="entry name" value="Mediator_Med15_fun"/>
</dbReference>
<dbReference type="Pfam" id="PF16987">
    <property type="entry name" value="KIX_2"/>
    <property type="match status" value="1"/>
</dbReference>
<dbReference type="Pfam" id="PF05397">
    <property type="entry name" value="Med15_fungi"/>
    <property type="match status" value="1"/>
</dbReference>
<protein>
    <recommendedName>
        <fullName>Mediator of RNA polymerase II transcription subunit 15</fullName>
    </recommendedName>
</protein>
<comment type="function">
    <text evidence="4">Component of the Mediator complex, a coactivator involved in the regulated transcription of nearly all RNA polymerase II-dependent genes. Mediator functions as a bridge to convey information from gene-specific regulatory proteins to the basal RNA polymerase II transcription machinery. Mediator is recruited to promoters by direct interactions with regulatory proteins and serves as a scaffold for the assembly of a functional preinitiation complex with RNA polymerase II and the general transcription factors. Component of a med15-hrp1 subcomplex, linking the Mediator complex to the chromatin-remodeling activity of hrp1 at a distinct subset of hrp1-bound gene promoters.</text>
</comment>
<comment type="subunit">
    <text evidence="4">Component of the Mediator complex. Component of a med15-hrp1 subcomplex, which flexibly associates with the other Mediator components.</text>
</comment>
<comment type="subcellular location">
    <subcellularLocation>
        <location evidence="2">Nucleus</location>
    </subcellularLocation>
</comment>
<comment type="similarity">
    <text evidence="5">Belongs to the Mediator complex subunit 15 family.</text>
</comment>
<proteinExistence type="evidence at protein level"/>
<reference key="1">
    <citation type="journal article" date="2002" name="Nature">
        <title>The genome sequence of Schizosaccharomyces pombe.</title>
        <authorList>
            <person name="Wood V."/>
            <person name="Gwilliam R."/>
            <person name="Rajandream M.A."/>
            <person name="Lyne M.H."/>
            <person name="Lyne R."/>
            <person name="Stewart A."/>
            <person name="Sgouros J.G."/>
            <person name="Peat N."/>
            <person name="Hayles J."/>
            <person name="Baker S.G."/>
            <person name="Basham D."/>
            <person name="Bowman S."/>
            <person name="Brooks K."/>
            <person name="Brown D."/>
            <person name="Brown S."/>
            <person name="Chillingworth T."/>
            <person name="Churcher C.M."/>
            <person name="Collins M."/>
            <person name="Connor R."/>
            <person name="Cronin A."/>
            <person name="Davis P."/>
            <person name="Feltwell T."/>
            <person name="Fraser A."/>
            <person name="Gentles S."/>
            <person name="Goble A."/>
            <person name="Hamlin N."/>
            <person name="Harris D.E."/>
            <person name="Hidalgo J."/>
            <person name="Hodgson G."/>
            <person name="Holroyd S."/>
            <person name="Hornsby T."/>
            <person name="Howarth S."/>
            <person name="Huckle E.J."/>
            <person name="Hunt S."/>
            <person name="Jagels K."/>
            <person name="James K.D."/>
            <person name="Jones L."/>
            <person name="Jones M."/>
            <person name="Leather S."/>
            <person name="McDonald S."/>
            <person name="McLean J."/>
            <person name="Mooney P."/>
            <person name="Moule S."/>
            <person name="Mungall K.L."/>
            <person name="Murphy L.D."/>
            <person name="Niblett D."/>
            <person name="Odell C."/>
            <person name="Oliver K."/>
            <person name="O'Neil S."/>
            <person name="Pearson D."/>
            <person name="Quail M.A."/>
            <person name="Rabbinowitsch E."/>
            <person name="Rutherford K.M."/>
            <person name="Rutter S."/>
            <person name="Saunders D."/>
            <person name="Seeger K."/>
            <person name="Sharp S."/>
            <person name="Skelton J."/>
            <person name="Simmonds M.N."/>
            <person name="Squares R."/>
            <person name="Squares S."/>
            <person name="Stevens K."/>
            <person name="Taylor K."/>
            <person name="Taylor R.G."/>
            <person name="Tivey A."/>
            <person name="Walsh S.V."/>
            <person name="Warren T."/>
            <person name="Whitehead S."/>
            <person name="Woodward J.R."/>
            <person name="Volckaert G."/>
            <person name="Aert R."/>
            <person name="Robben J."/>
            <person name="Grymonprez B."/>
            <person name="Weltjens I."/>
            <person name="Vanstreels E."/>
            <person name="Rieger M."/>
            <person name="Schaefer M."/>
            <person name="Mueller-Auer S."/>
            <person name="Gabel C."/>
            <person name="Fuchs M."/>
            <person name="Duesterhoeft A."/>
            <person name="Fritzc C."/>
            <person name="Holzer E."/>
            <person name="Moestl D."/>
            <person name="Hilbert H."/>
            <person name="Borzym K."/>
            <person name="Langer I."/>
            <person name="Beck A."/>
            <person name="Lehrach H."/>
            <person name="Reinhardt R."/>
            <person name="Pohl T.M."/>
            <person name="Eger P."/>
            <person name="Zimmermann W."/>
            <person name="Wedler H."/>
            <person name="Wambutt R."/>
            <person name="Purnelle B."/>
            <person name="Goffeau A."/>
            <person name="Cadieu E."/>
            <person name="Dreano S."/>
            <person name="Gloux S."/>
            <person name="Lelaure V."/>
            <person name="Mottier S."/>
            <person name="Galibert F."/>
            <person name="Aves S.J."/>
            <person name="Xiang Z."/>
            <person name="Hunt C."/>
            <person name="Moore K."/>
            <person name="Hurst S.M."/>
            <person name="Lucas M."/>
            <person name="Rochet M."/>
            <person name="Gaillardin C."/>
            <person name="Tallada V.A."/>
            <person name="Garzon A."/>
            <person name="Thode G."/>
            <person name="Daga R.R."/>
            <person name="Cruzado L."/>
            <person name="Jimenez J."/>
            <person name="Sanchez M."/>
            <person name="del Rey F."/>
            <person name="Benito J."/>
            <person name="Dominguez A."/>
            <person name="Revuelta J.L."/>
            <person name="Moreno S."/>
            <person name="Armstrong J."/>
            <person name="Forsburg S.L."/>
            <person name="Cerutti L."/>
            <person name="Lowe T."/>
            <person name="McCombie W.R."/>
            <person name="Paulsen I."/>
            <person name="Potashkin J."/>
            <person name="Shpakovski G.V."/>
            <person name="Ussery D."/>
            <person name="Barrell B.G."/>
            <person name="Nurse P."/>
        </authorList>
    </citation>
    <scope>NUCLEOTIDE SEQUENCE [LARGE SCALE GENOMIC DNA]</scope>
    <source>
        <strain>972 / ATCC 24843</strain>
    </source>
</reference>
<reference key="2">
    <citation type="journal article" date="2006" name="Nat. Biotechnol.">
        <title>ORFeome cloning and global analysis of protein localization in the fission yeast Schizosaccharomyces pombe.</title>
        <authorList>
            <person name="Matsuyama A."/>
            <person name="Arai R."/>
            <person name="Yashiroda Y."/>
            <person name="Shirai A."/>
            <person name="Kamata A."/>
            <person name="Sekido S."/>
            <person name="Kobayashi Y."/>
            <person name="Hashimoto A."/>
            <person name="Hamamoto M."/>
            <person name="Hiraoka Y."/>
            <person name="Horinouchi S."/>
            <person name="Yoshida M."/>
        </authorList>
    </citation>
    <scope>SUBCELLULAR LOCATION [LARGE SCALE ANALYSIS]</scope>
</reference>
<reference key="3">
    <citation type="journal article" date="2008" name="J. Proteome Res.">
        <title>Phosphoproteome analysis of fission yeast.</title>
        <authorList>
            <person name="Wilson-Grady J.T."/>
            <person name="Villen J."/>
            <person name="Gygi S.P."/>
        </authorList>
    </citation>
    <scope>PHOSPHORYLATION [LARGE SCALE ANALYSIS] AT SER-948</scope>
    <scope>IDENTIFICATION BY MASS SPECTROMETRY</scope>
</reference>
<reference key="4">
    <citation type="journal article" date="2010" name="J. Biol. Chem.">
        <title>A chromatin-remodeling protein is a component of fission yeast mediator.</title>
        <authorList>
            <person name="Khorosjutina O."/>
            <person name="Wanrooij P.H."/>
            <person name="Walfridsson J."/>
            <person name="Szilagyi Z."/>
            <person name="Zhu X."/>
            <person name="Baraznenok V."/>
            <person name="Ekwall K."/>
            <person name="Gustafsson C.M."/>
        </authorList>
    </citation>
    <scope>FUNCTION</scope>
    <scope>SUBUNIT</scope>
    <scope>INTERACTION WITH HRP1</scope>
</reference>
<reference key="5">
    <citation type="journal article" date="2014" name="Nat. Struct. Mol. Biol.">
        <title>The translational landscape of fission-yeast meiosis and sporulation.</title>
        <authorList>
            <person name="Duncan C.D."/>
            <person name="Mata J."/>
        </authorList>
    </citation>
    <scope>GENE MODEL REVISION</scope>
</reference>
<gene>
    <name type="primary">med15</name>
    <name type="synonym">gal11</name>
    <name evidence="6" type="ORF">SPBC146.01</name>
    <name type="ORF">SPBP35G2.15</name>
</gene>
<organism>
    <name type="scientific">Schizosaccharomyces pombe (strain 972 / ATCC 24843)</name>
    <name type="common">Fission yeast</name>
    <dbReference type="NCBI Taxonomy" id="284812"/>
    <lineage>
        <taxon>Eukaryota</taxon>
        <taxon>Fungi</taxon>
        <taxon>Dikarya</taxon>
        <taxon>Ascomycota</taxon>
        <taxon>Taphrinomycotina</taxon>
        <taxon>Schizosaccharomycetes</taxon>
        <taxon>Schizosaccharomycetales</taxon>
        <taxon>Schizosaccharomycetaceae</taxon>
        <taxon>Schizosaccharomyces</taxon>
    </lineage>
</organism>
<sequence length="1063" mass="118453">MNRNVDKGWQAQIRPNERQSIALQIAQTLRIISPSISEVQLMNMALSFERQAFDGASSKNEYLTTCGKKTAQLRDQIRDTLQATQMKQMPSVYNNAGNVGALPTAGPNRLANNPRVMPRLQNQNVPMQAGMQQFARNMKLTPQQRQFLLQQSQIQQQRQQQQQQSQQPQQTQQPQASSPTAPNTEANQQRSGSVPGRIVPALTQQQLNNLCNQITALLARNGNPPIPMQKLQSMPPARLISIYQNQIQKFRSLQHMQQQQQQQQQQQQQQQQQQQQQQQQQQQQQQQQQKQAPQNAFFPNPQGNVGAQSLQSMSPQDQPSTQQQQPQRTAAPPNNPNVNATNNNRINIEMLNIPVPKQLFDQIPNLPPNVKIWRDVLELGQSQRLPPEQLKLIGMLYRKHLQIILQHRQQQLNKIQNARMNSQNAPNTNKLGNPQPDNTGNPQAFSQQAFAQQQQQQQQQLHRTSNPTSASVTSQNGQQPINTKLSANAAKTNYQSYLTNKARNATQPTQPPVSQVDYSNNLPPNLDTSSTFRSSASPPSAFTKAGNEALSVPLSGARNTAASRPTNLAAGNSSASIVQQLLECGGTMGQQKMTSRIRELTERVMHSLMRPVPLDLPHDQKVMIASLIKSAYPMFSRTNQLICLFYCLTGNEEATIQLIQMRHIFKLQLEGLQQGVFTCAPQTLAKIKEKTSRYFAFVKAQLLRLHHEVNNNNMSIQNALAHISSLRTASINQQQQPQPQSQQQQQASQFPQAPSVSSNVRPINGSIPNAQPSVPGQAQPAAKANSVGNTSFPVDSKLAFQSLDVSQPDLQAKQKIASQVMKHGLKPEDLKLPPSKKKKIENLSTVQKPKDSVVNTPDVIMSSVDEIPSSVSPGTIAKEEGMAKAREEAIANPLKYAIDAFVAVDHEEEVSAIKSSQTPSSILKTPQSFFIPPSTPDLSFTDNKNSLSPSNILSLDGKFSFNDDSELWADLGNEINSEIGFLKEPDTMNLALDADKDKTKMQNKLTQINFDESCFLDPAIDDKDPWNEMLHEKKVLLKQLQVGNEDEDNIAFPTSTNIWQVVI</sequence>
<feature type="chain" id="PRO_0000116849" description="Mediator of RNA polymerase II transcription subunit 15">
    <location>
        <begin position="1"/>
        <end position="1063"/>
    </location>
</feature>
<feature type="region of interest" description="Disordered" evidence="1">
    <location>
        <begin position="149"/>
        <end position="194"/>
    </location>
</feature>
<feature type="region of interest" description="Disordered" evidence="1">
    <location>
        <begin position="286"/>
        <end position="342"/>
    </location>
</feature>
<feature type="region of interest" description="Disordered" evidence="1">
    <location>
        <begin position="422"/>
        <end position="482"/>
    </location>
</feature>
<feature type="region of interest" description="Disordered" evidence="1">
    <location>
        <begin position="500"/>
        <end position="544"/>
    </location>
</feature>
<feature type="region of interest" description="Disordered" evidence="1">
    <location>
        <begin position="728"/>
        <end position="789"/>
    </location>
</feature>
<feature type="compositionally biased region" description="Low complexity" evidence="1">
    <location>
        <begin position="149"/>
        <end position="175"/>
    </location>
</feature>
<feature type="compositionally biased region" description="Polar residues" evidence="1">
    <location>
        <begin position="176"/>
        <end position="192"/>
    </location>
</feature>
<feature type="compositionally biased region" description="Polar residues" evidence="1">
    <location>
        <begin position="301"/>
        <end position="310"/>
    </location>
</feature>
<feature type="compositionally biased region" description="Low complexity" evidence="1">
    <location>
        <begin position="311"/>
        <end position="342"/>
    </location>
</feature>
<feature type="compositionally biased region" description="Polar residues" evidence="1">
    <location>
        <begin position="422"/>
        <end position="442"/>
    </location>
</feature>
<feature type="compositionally biased region" description="Low complexity" evidence="1">
    <location>
        <begin position="443"/>
        <end position="460"/>
    </location>
</feature>
<feature type="compositionally biased region" description="Polar residues" evidence="1">
    <location>
        <begin position="461"/>
        <end position="482"/>
    </location>
</feature>
<feature type="compositionally biased region" description="Polar residues" evidence="1">
    <location>
        <begin position="500"/>
        <end position="527"/>
    </location>
</feature>
<feature type="compositionally biased region" description="Low complexity" evidence="1">
    <location>
        <begin position="528"/>
        <end position="542"/>
    </location>
</feature>
<feature type="compositionally biased region" description="Low complexity" evidence="1">
    <location>
        <begin position="733"/>
        <end position="758"/>
    </location>
</feature>
<feature type="compositionally biased region" description="Polar residues" evidence="1">
    <location>
        <begin position="766"/>
        <end position="776"/>
    </location>
</feature>
<feature type="modified residue" description="Phosphoserine" evidence="3">
    <location>
        <position position="948"/>
    </location>
</feature>
<keyword id="KW-0539">Nucleus</keyword>
<keyword id="KW-0597">Phosphoprotein</keyword>
<keyword id="KW-1185">Reference proteome</keyword>
<accession>Q9Y808</accession>
<accession>A0AAN2H6E0</accession>
<accession>Q9P788</accession>